<protein>
    <recommendedName>
        <fullName>Beta-1-syntrophin</fullName>
    </recommendedName>
    <alternativeName>
        <fullName>59 kDa dystrophin-associated protein A1 basic component 1</fullName>
        <shortName>DAPA1B</shortName>
    </alternativeName>
    <alternativeName>
        <fullName>BSYN2</fullName>
    </alternativeName>
    <alternativeName>
        <fullName>Syntrophin-2</fullName>
    </alternativeName>
    <alternativeName>
        <fullName>Tax interaction protein 43</fullName>
        <shortName>TIP-43</shortName>
    </alternativeName>
</protein>
<gene>
    <name type="primary">SNTB1</name>
    <name type="synonym">SNT2B1</name>
</gene>
<comment type="function">
    <text>Adapter protein that binds to and probably organizes the subcellular localization of a variety of membrane proteins. May link various receptors to the actin cytoskeleton and the dystrophin glycoprotein complex.</text>
</comment>
<comment type="subunit">
    <text evidence="1 2 7 9 12">Monomer and homodimer (Probable). Interacts with the other members of the syntrophin family SNTA1 and SNTB2; with the sodium channel proteins SCN4A and SCN5A (By similarity). Interacts with the viral HTLV-1 TAX protein and with dystrophin protein DMD and related proteins DTNA and UTRN. Interacts with DTNB (By similarity).</text>
</comment>
<comment type="interaction">
    <interactant intactId="EBI-295843">
        <id>Q13884</id>
    </interactant>
    <interactant intactId="EBI-784112">
        <id>O95477</id>
        <label>ABCA1</label>
    </interactant>
    <organismsDiffer>false</organismsDiffer>
    <experiments>3</experiments>
</comment>
<comment type="interaction">
    <interactant intactId="EBI-295843">
        <id>Q13884</id>
    </interactant>
    <interactant intactId="EBI-295827">
        <id>P11532</id>
        <label>DMD</label>
    </interactant>
    <organismsDiffer>false</organismsDiffer>
    <experiments>6</experiments>
</comment>
<comment type="interaction">
    <interactant intactId="EBI-295843">
        <id>Q13884</id>
    </interactant>
    <interactant intactId="EBI-295856">
        <id>P46939</id>
        <label>UTRN</label>
    </interactant>
    <organismsDiffer>false</organismsDiffer>
    <experiments>2</experiments>
</comment>
<comment type="subcellular location">
    <subcellularLocation>
        <location evidence="1">Cell membrane</location>
        <location evidence="1">Sarcolemma</location>
        <topology evidence="1">Peripheral membrane protein</topology>
        <orientation evidence="1">Cytoplasmic side</orientation>
    </subcellularLocation>
    <subcellularLocation>
        <location evidence="1">Cell junction</location>
    </subcellularLocation>
    <subcellularLocation>
        <location evidence="1">Cytoplasm</location>
        <location evidence="1">Cytoskeleton</location>
    </subcellularLocation>
    <text evidence="1">In skeletal muscle, it localizes at the cytoplasmic side of the sarcolemmal membrane and at neuromuscular junctions.</text>
</comment>
<comment type="alternative products">
    <event type="alternative splicing"/>
    <isoform>
        <id>Q13884-1</id>
        <name>1</name>
        <sequence type="displayed"/>
    </isoform>
    <isoform>
        <id>Q13884-2</id>
        <name>2</name>
        <sequence type="described" ref="VSP_006354 VSP_006355"/>
    </isoform>
</comment>
<comment type="tissue specificity">
    <text evidence="8">Ubiquitous.</text>
</comment>
<comment type="domain">
    <text evidence="1">The PH 1 domain mediates the oligomerization in a calcium dependent manner.</text>
</comment>
<comment type="domain">
    <text evidence="1">The PDZ domain binds to the last three or four amino acids of ion channels and receptor proteins. The association with dystrophin or related proteins probably leaves the PDZ domain available to recruit proteins to the membrane (By similarity).</text>
</comment>
<comment type="domain">
    <text evidence="1">The SU domain binds calmodulin in a calcium-dependent manner.</text>
</comment>
<comment type="PTM">
    <text evidence="1">Phosphorylated by CaM-kinase II.</text>
</comment>
<comment type="similarity">
    <text evidence="12">Belongs to the syntrophin family.</text>
</comment>
<reference key="1">
    <citation type="journal article" date="1994" name="Proc. Natl. Acad. Sci. U.S.A.">
        <title>Cloning of human basic A1, a distinct 59-kDa dystrophin-associated protein encoded on chromosome 8q23-24.</title>
        <authorList>
            <person name="Ahn A.H."/>
            <person name="Yoshida M."/>
            <person name="Anderson M.S."/>
            <person name="Feener C.A."/>
            <person name="Selig S."/>
            <person name="Hagiwara Y."/>
            <person name="Ozawa E."/>
            <person name="Kunkel L.M."/>
        </authorList>
    </citation>
    <scope>NUCLEOTIDE SEQUENCE [GENOMIC DNA] (ISOFORM 1)</scope>
    <scope>PROTEIN SEQUENCE OF 105-114; 197-208; 339-348 AND 351-355</scope>
    <scope>TISSUE SPECIFICITY</scope>
    <source>
        <tissue>Skeletal muscle</tissue>
    </source>
</reference>
<reference key="2">
    <citation type="journal article" date="2004" name="Nat. Genet.">
        <title>Complete sequencing and characterization of 21,243 full-length human cDNAs.</title>
        <authorList>
            <person name="Ota T."/>
            <person name="Suzuki Y."/>
            <person name="Nishikawa T."/>
            <person name="Otsuki T."/>
            <person name="Sugiyama T."/>
            <person name="Irie R."/>
            <person name="Wakamatsu A."/>
            <person name="Hayashi K."/>
            <person name="Sato H."/>
            <person name="Nagai K."/>
            <person name="Kimura K."/>
            <person name="Makita H."/>
            <person name="Sekine M."/>
            <person name="Obayashi M."/>
            <person name="Nishi T."/>
            <person name="Shibahara T."/>
            <person name="Tanaka T."/>
            <person name="Ishii S."/>
            <person name="Yamamoto J."/>
            <person name="Saito K."/>
            <person name="Kawai Y."/>
            <person name="Isono Y."/>
            <person name="Nakamura Y."/>
            <person name="Nagahari K."/>
            <person name="Murakami K."/>
            <person name="Yasuda T."/>
            <person name="Iwayanagi T."/>
            <person name="Wagatsuma M."/>
            <person name="Shiratori A."/>
            <person name="Sudo H."/>
            <person name="Hosoiri T."/>
            <person name="Kaku Y."/>
            <person name="Kodaira H."/>
            <person name="Kondo H."/>
            <person name="Sugawara M."/>
            <person name="Takahashi M."/>
            <person name="Kanda K."/>
            <person name="Yokoi T."/>
            <person name="Furuya T."/>
            <person name="Kikkawa E."/>
            <person name="Omura Y."/>
            <person name="Abe K."/>
            <person name="Kamihara K."/>
            <person name="Katsuta N."/>
            <person name="Sato K."/>
            <person name="Tanikawa M."/>
            <person name="Yamazaki M."/>
            <person name="Ninomiya K."/>
            <person name="Ishibashi T."/>
            <person name="Yamashita H."/>
            <person name="Murakawa K."/>
            <person name="Fujimori K."/>
            <person name="Tanai H."/>
            <person name="Kimata M."/>
            <person name="Watanabe M."/>
            <person name="Hiraoka S."/>
            <person name="Chiba Y."/>
            <person name="Ishida S."/>
            <person name="Ono Y."/>
            <person name="Takiguchi S."/>
            <person name="Watanabe S."/>
            <person name="Yosida M."/>
            <person name="Hotuta T."/>
            <person name="Kusano J."/>
            <person name="Kanehori K."/>
            <person name="Takahashi-Fujii A."/>
            <person name="Hara H."/>
            <person name="Tanase T.-O."/>
            <person name="Nomura Y."/>
            <person name="Togiya S."/>
            <person name="Komai F."/>
            <person name="Hara R."/>
            <person name="Takeuchi K."/>
            <person name="Arita M."/>
            <person name="Imose N."/>
            <person name="Musashino K."/>
            <person name="Yuuki H."/>
            <person name="Oshima A."/>
            <person name="Sasaki N."/>
            <person name="Aotsuka S."/>
            <person name="Yoshikawa Y."/>
            <person name="Matsunawa H."/>
            <person name="Ichihara T."/>
            <person name="Shiohata N."/>
            <person name="Sano S."/>
            <person name="Moriya S."/>
            <person name="Momiyama H."/>
            <person name="Satoh N."/>
            <person name="Takami S."/>
            <person name="Terashima Y."/>
            <person name="Suzuki O."/>
            <person name="Nakagawa S."/>
            <person name="Senoh A."/>
            <person name="Mizoguchi H."/>
            <person name="Goto Y."/>
            <person name="Shimizu F."/>
            <person name="Wakebe H."/>
            <person name="Hishigaki H."/>
            <person name="Watanabe T."/>
            <person name="Sugiyama A."/>
            <person name="Takemoto M."/>
            <person name="Kawakami B."/>
            <person name="Yamazaki M."/>
            <person name="Watanabe K."/>
            <person name="Kumagai A."/>
            <person name="Itakura S."/>
            <person name="Fukuzumi Y."/>
            <person name="Fujimori Y."/>
            <person name="Komiyama M."/>
            <person name="Tashiro H."/>
            <person name="Tanigami A."/>
            <person name="Fujiwara T."/>
            <person name="Ono T."/>
            <person name="Yamada K."/>
            <person name="Fujii Y."/>
            <person name="Ozaki K."/>
            <person name="Hirao M."/>
            <person name="Ohmori Y."/>
            <person name="Kawabata A."/>
            <person name="Hikiji T."/>
            <person name="Kobatake N."/>
            <person name="Inagaki H."/>
            <person name="Ikema Y."/>
            <person name="Okamoto S."/>
            <person name="Okitani R."/>
            <person name="Kawakami T."/>
            <person name="Noguchi S."/>
            <person name="Itoh T."/>
            <person name="Shigeta K."/>
            <person name="Senba T."/>
            <person name="Matsumura K."/>
            <person name="Nakajima Y."/>
            <person name="Mizuno T."/>
            <person name="Morinaga M."/>
            <person name="Sasaki M."/>
            <person name="Togashi T."/>
            <person name="Oyama M."/>
            <person name="Hata H."/>
            <person name="Watanabe M."/>
            <person name="Komatsu T."/>
            <person name="Mizushima-Sugano J."/>
            <person name="Satoh T."/>
            <person name="Shirai Y."/>
            <person name="Takahashi Y."/>
            <person name="Nakagawa K."/>
            <person name="Okumura K."/>
            <person name="Nagase T."/>
            <person name="Nomura N."/>
            <person name="Kikuchi H."/>
            <person name="Masuho Y."/>
            <person name="Yamashita R."/>
            <person name="Nakai K."/>
            <person name="Yada T."/>
            <person name="Nakamura Y."/>
            <person name="Ohara O."/>
            <person name="Isogai T."/>
            <person name="Sugano S."/>
        </authorList>
    </citation>
    <scope>NUCLEOTIDE SEQUENCE [LARGE SCALE MRNA] (ISOFORM 1)</scope>
    <source>
        <tissue>Thymus</tissue>
    </source>
</reference>
<reference key="3">
    <citation type="journal article" date="2004" name="Genome Res.">
        <title>The status, quality, and expansion of the NIH full-length cDNA project: the Mammalian Gene Collection (MGC).</title>
        <authorList>
            <consortium name="The MGC Project Team"/>
        </authorList>
    </citation>
    <scope>NUCLEOTIDE SEQUENCE [LARGE SCALE MRNA] (ISOFORM 1)</scope>
    <source>
        <tissue>Lung</tissue>
    </source>
</reference>
<reference key="4">
    <citation type="journal article" date="2003" name="Nat. Biotechnol.">
        <title>Exploring proteomes and analyzing protein processing by mass spectrometric identification of sorted N-terminal peptides.</title>
        <authorList>
            <person name="Gevaert K."/>
            <person name="Goethals M."/>
            <person name="Martens L."/>
            <person name="Van Damme J."/>
            <person name="Staes A."/>
            <person name="Thomas G.R."/>
            <person name="Vandekerckhove J."/>
        </authorList>
    </citation>
    <scope>PROTEIN SEQUENCE OF 2-19</scope>
    <scope>ACETYLATION AT ALA-2</scope>
    <source>
        <tissue>Platelet</tissue>
    </source>
</reference>
<reference key="5">
    <citation type="submission" date="2005-10" db="UniProtKB">
        <authorList>
            <person name="Bienvenut W.V."/>
            <person name="Okada H."/>
        </authorList>
    </citation>
    <scope>PROTEIN SEQUENCE OF 2-19; 23-31; 145-169; 325-332 AND 364-379</scope>
    <scope>CLEAVAGE OF INITIATOR METHIONINE</scope>
    <scope>ACETYLATION AT ALA-2</scope>
    <scope>IDENTIFICATION BY MASS SPECTROMETRY</scope>
    <source>
        <tissue>Histiocytic lymphoma</tissue>
    </source>
</reference>
<reference key="6">
    <citation type="journal article" date="1998" name="Oncogene">
        <title>The C-terminus of the HTLV-1 Tax oncoprotein mediates interaction with the PDZ domain of cellular proteins.</title>
        <authorList>
            <person name="Rousset R."/>
            <person name="Fabre S."/>
            <person name="Desbois C."/>
            <person name="Bantignies F."/>
            <person name="Jalinot P."/>
        </authorList>
    </citation>
    <scope>NUCLEOTIDE SEQUENCE [MRNA] OF 95-538 (ISOFORM 2)</scope>
    <scope>INTERACTION WITH HTLV-1 TAX</scope>
    <source>
        <tissue>Lymphocyte</tissue>
    </source>
</reference>
<reference key="7">
    <citation type="journal article" date="1995" name="J. Cell Biol.">
        <title>Syntrophin binds to an alternatively spliced exon of dystrophin.</title>
        <authorList>
            <person name="Ahn A.H."/>
            <person name="Kunkel L.M."/>
        </authorList>
    </citation>
    <scope>INTERACTION WITH DMD; DTNA AND UTRN</scope>
</reference>
<reference key="8">
    <citation type="journal article" date="2008" name="J. Proteome Res.">
        <title>Phosphoproteome of resting human platelets.</title>
        <authorList>
            <person name="Zahedi R.P."/>
            <person name="Lewandrowski U."/>
            <person name="Wiesner J."/>
            <person name="Wortelkamp S."/>
            <person name="Moebius J."/>
            <person name="Schuetz C."/>
            <person name="Walter U."/>
            <person name="Gambaryan S."/>
            <person name="Sickmann A."/>
        </authorList>
    </citation>
    <scope>PHOSPHORYLATION [LARGE SCALE ANALYSIS] AT SER-87; SER-219 AND SER-389</scope>
    <scope>IDENTIFICATION BY MASS SPECTROMETRY [LARGE SCALE ANALYSIS]</scope>
    <source>
        <tissue>Platelet</tissue>
    </source>
</reference>
<reference key="9">
    <citation type="journal article" date="2009" name="Sci. Signal.">
        <title>Quantitative phosphoproteomic analysis of T cell receptor signaling reveals system-wide modulation of protein-protein interactions.</title>
        <authorList>
            <person name="Mayya V."/>
            <person name="Lundgren D.H."/>
            <person name="Hwang S.-I."/>
            <person name="Rezaul K."/>
            <person name="Wu L."/>
            <person name="Eng J.K."/>
            <person name="Rodionov V."/>
            <person name="Han D.K."/>
        </authorList>
    </citation>
    <scope>PHOSPHORYLATION [LARGE SCALE ANALYSIS] AT SER-219</scope>
    <scope>IDENTIFICATION BY MASS SPECTROMETRY [LARGE SCALE ANALYSIS]</scope>
    <source>
        <tissue>Leukemic T-cell</tissue>
    </source>
</reference>
<reference key="10">
    <citation type="journal article" date="2010" name="Sci. Signal.">
        <title>Quantitative phosphoproteomics reveals widespread full phosphorylation site occupancy during mitosis.</title>
        <authorList>
            <person name="Olsen J.V."/>
            <person name="Vermeulen M."/>
            <person name="Santamaria A."/>
            <person name="Kumar C."/>
            <person name="Miller M.L."/>
            <person name="Jensen L.J."/>
            <person name="Gnad F."/>
            <person name="Cox J."/>
            <person name="Jensen T.S."/>
            <person name="Nigg E.A."/>
            <person name="Brunak S."/>
            <person name="Mann M."/>
        </authorList>
    </citation>
    <scope>PHOSPHORYLATION [LARGE SCALE ANALYSIS] AT SER-87 AND SER-389</scope>
    <scope>IDENTIFICATION BY MASS SPECTROMETRY [LARGE SCALE ANALYSIS]</scope>
    <source>
        <tissue>Cervix carcinoma</tissue>
    </source>
</reference>
<reference key="11">
    <citation type="journal article" date="2011" name="BMC Syst. Biol.">
        <title>Initial characterization of the human central proteome.</title>
        <authorList>
            <person name="Burkard T.R."/>
            <person name="Planyavsky M."/>
            <person name="Kaupe I."/>
            <person name="Breitwieser F.P."/>
            <person name="Buerckstuemmer T."/>
            <person name="Bennett K.L."/>
            <person name="Superti-Furga G."/>
            <person name="Colinge J."/>
        </authorList>
    </citation>
    <scope>IDENTIFICATION BY MASS SPECTROMETRY [LARGE SCALE ANALYSIS]</scope>
</reference>
<reference key="12">
    <citation type="journal article" date="2011" name="Sci. Signal.">
        <title>System-wide temporal characterization of the proteome and phosphoproteome of human embryonic stem cell differentiation.</title>
        <authorList>
            <person name="Rigbolt K.T."/>
            <person name="Prokhorova T.A."/>
            <person name="Akimov V."/>
            <person name="Henningsen J."/>
            <person name="Johansen P.T."/>
            <person name="Kratchmarova I."/>
            <person name="Kassem M."/>
            <person name="Mann M."/>
            <person name="Olsen J.V."/>
            <person name="Blagoev B."/>
        </authorList>
    </citation>
    <scope>PHOSPHORYLATION [LARGE SCALE ANALYSIS] AT SER-389</scope>
    <scope>IDENTIFICATION BY MASS SPECTROMETRY [LARGE SCALE ANALYSIS]</scope>
</reference>
<reference key="13">
    <citation type="journal article" date="2012" name="Proc. Natl. Acad. Sci. U.S.A.">
        <title>N-terminal acetylome analyses and functional insights of the N-terminal acetyltransferase NatB.</title>
        <authorList>
            <person name="Van Damme P."/>
            <person name="Lasa M."/>
            <person name="Polevoda B."/>
            <person name="Gazquez C."/>
            <person name="Elosegui-Artola A."/>
            <person name="Kim D.S."/>
            <person name="De Juan-Pardo E."/>
            <person name="Demeyer K."/>
            <person name="Hole K."/>
            <person name="Larrea E."/>
            <person name="Timmerman E."/>
            <person name="Prieto J."/>
            <person name="Arnesen T."/>
            <person name="Sherman F."/>
            <person name="Gevaert K."/>
            <person name="Aldabe R."/>
        </authorList>
    </citation>
    <scope>ACETYLATION [LARGE SCALE ANALYSIS] AT ALA-2</scope>
    <scope>CLEAVAGE OF INITIATOR METHIONINE [LARGE SCALE ANALYSIS]</scope>
    <scope>IDENTIFICATION BY MASS SPECTROMETRY [LARGE SCALE ANALYSIS]</scope>
</reference>
<reference key="14">
    <citation type="journal article" date="2014" name="J. Proteomics">
        <title>An enzyme assisted RP-RPLC approach for in-depth analysis of human liver phosphoproteome.</title>
        <authorList>
            <person name="Bian Y."/>
            <person name="Song C."/>
            <person name="Cheng K."/>
            <person name="Dong M."/>
            <person name="Wang F."/>
            <person name="Huang J."/>
            <person name="Sun D."/>
            <person name="Wang L."/>
            <person name="Ye M."/>
            <person name="Zou H."/>
        </authorList>
    </citation>
    <scope>PHOSPHORYLATION [LARGE SCALE ANALYSIS] AT SER-87; SER-126; THR-214; SER-219; SER-232 AND SER-389</scope>
    <scope>IDENTIFICATION BY MASS SPECTROMETRY [LARGE SCALE ANALYSIS]</scope>
    <source>
        <tissue>Liver</tissue>
    </source>
</reference>
<reference key="15">
    <citation type="journal article" date="2015" name="Proteomics">
        <title>N-terminome analysis of the human mitochondrial proteome.</title>
        <authorList>
            <person name="Vaca Jacome A.S."/>
            <person name="Rabilloud T."/>
            <person name="Schaeffer-Reiss C."/>
            <person name="Rompais M."/>
            <person name="Ayoub D."/>
            <person name="Lane L."/>
            <person name="Bairoch A."/>
            <person name="Van Dorsselaer A."/>
            <person name="Carapito C."/>
        </authorList>
    </citation>
    <scope>ACETYLATION [LARGE SCALE ANALYSIS] AT ALA-2</scope>
    <scope>CLEAVAGE OF INITIATOR METHIONINE [LARGE SCALE ANALYSIS]</scope>
    <scope>IDENTIFICATION BY MASS SPECTROMETRY [LARGE SCALE ANALYSIS]</scope>
</reference>
<feature type="initiator methionine" description="Removed" evidence="6 10 17 19">
    <location>
        <position position="1"/>
    </location>
</feature>
<feature type="chain" id="PRO_0000184009" description="Beta-1-syntrophin">
    <location>
        <begin position="2"/>
        <end position="538"/>
    </location>
</feature>
<feature type="domain" description="PH 1" evidence="4">
    <location>
        <begin position="19"/>
        <end position="298"/>
    </location>
</feature>
<feature type="domain" description="PDZ" evidence="3">
    <location>
        <begin position="112"/>
        <end position="195"/>
    </location>
</feature>
<feature type="domain" description="PH 2" evidence="4">
    <location>
        <begin position="322"/>
        <end position="433"/>
    </location>
</feature>
<feature type="domain" description="SU">
    <location>
        <begin position="482"/>
        <end position="538"/>
    </location>
</feature>
<feature type="region of interest" description="Disordered" evidence="5">
    <location>
        <begin position="205"/>
        <end position="237"/>
    </location>
</feature>
<feature type="region of interest" description="Calmodulin-binding" evidence="1">
    <location>
        <begin position="518"/>
        <end position="538"/>
    </location>
</feature>
<feature type="compositionally biased region" description="Low complexity" evidence="5">
    <location>
        <begin position="225"/>
        <end position="236"/>
    </location>
</feature>
<feature type="modified residue" description="N-acetylalanine" evidence="6 10 17 19">
    <location>
        <position position="2"/>
    </location>
</feature>
<feature type="modified residue" description="Phosphoserine" evidence="13 15 18">
    <location>
        <position position="87"/>
    </location>
</feature>
<feature type="modified residue" description="Phosphoserine" evidence="18">
    <location>
        <position position="126"/>
    </location>
</feature>
<feature type="modified residue" description="Phosphoserine" evidence="2">
    <location>
        <position position="205"/>
    </location>
</feature>
<feature type="modified residue" description="Phosphothreonine" evidence="18">
    <location>
        <position position="214"/>
    </location>
</feature>
<feature type="modified residue" description="Phosphoserine" evidence="13 14 18">
    <location>
        <position position="219"/>
    </location>
</feature>
<feature type="modified residue" description="Phosphoserine" evidence="18">
    <location>
        <position position="232"/>
    </location>
</feature>
<feature type="modified residue" description="Phosphoserine" evidence="2">
    <location>
        <position position="236"/>
    </location>
</feature>
<feature type="modified residue" description="Phosphoserine" evidence="13 15 16 18">
    <location>
        <position position="389"/>
    </location>
</feature>
<feature type="splice variant" id="VSP_006354" description="In isoform 2." evidence="11">
    <original>RLVH</original>
    <variation>SPHP</variation>
    <location>
        <begin position="379"/>
        <end position="382"/>
    </location>
</feature>
<feature type="splice variant" id="VSP_006355" description="In isoform 2." evidence="11">
    <location>
        <begin position="383"/>
        <end position="538"/>
    </location>
</feature>
<feature type="strand" evidence="20">
    <location>
        <begin position="111"/>
        <end position="116"/>
    </location>
</feature>
<feature type="turn" evidence="20">
    <location>
        <begin position="119"/>
        <end position="121"/>
    </location>
</feature>
<feature type="strand" evidence="20">
    <location>
        <begin position="125"/>
        <end position="130"/>
    </location>
</feature>
<feature type="helix" evidence="20">
    <location>
        <begin position="131"/>
        <end position="133"/>
    </location>
</feature>
<feature type="strand" evidence="20">
    <location>
        <begin position="135"/>
        <end position="142"/>
    </location>
</feature>
<feature type="helix" evidence="20">
    <location>
        <begin position="147"/>
        <end position="151"/>
    </location>
</feature>
<feature type="strand" evidence="20">
    <location>
        <begin position="158"/>
        <end position="163"/>
    </location>
</feature>
<feature type="helix" evidence="20">
    <location>
        <begin position="173"/>
        <end position="182"/>
    </location>
</feature>
<feature type="strand" evidence="20">
    <location>
        <begin position="185"/>
        <end position="193"/>
    </location>
</feature>
<sequence length="538" mass="58061">MAVAAAAAAAGPAGAGGGRAQRSGLLEVLVRDRWHKVLVNLSEDALVLSSEEGAAAYNGIGTATNGSFCRGAGAGHPGAGGAQPPDSPAGVRTAFTDLPEQVPESISNQKRGVKVLKQELGGLGISIKGGKENKMPILISKIFKGLAADQTQALYVGDAILSVNGADLRDATHDEAVQALKRAGKEVLLEVKYMREATPYVKKGSPVSEIGWETPPPESPRLGGSTSDPPSSQSFSFHRDRKSIPLKMCYVTRSMALADPENRQLEIHSPDAKHTVILRSKDSATAQAWFSAIHSNVNDLLTRVIAEVREQLGKTGIAGSREIRHLGWLAEKVPGESKKQWKPALVVLTEKDLLIYDSMPRRKEAWFSPVHTYPLLATRLVHSGPGKGSPQAGVDLSFATRTGTRQGIETHLFRAETSRDLSHWTRSIVQGCHNSAELIAEISTACTYKNQECRLTIHYENGFSITTEPQEGAFPKTIIQSPYEKLKMSSDDGIRMLYLDFGGKDGEIQLDLHSCPKPIVFIIHSFLSAKITRLGLVA</sequence>
<name>SNTB1_HUMAN</name>
<evidence type="ECO:0000250" key="1"/>
<evidence type="ECO:0000250" key="2">
    <source>
        <dbReference type="UniProtKB" id="Q99L88"/>
    </source>
</evidence>
<evidence type="ECO:0000255" key="3">
    <source>
        <dbReference type="PROSITE-ProRule" id="PRU00143"/>
    </source>
</evidence>
<evidence type="ECO:0000255" key="4">
    <source>
        <dbReference type="PROSITE-ProRule" id="PRU00145"/>
    </source>
</evidence>
<evidence type="ECO:0000256" key="5">
    <source>
        <dbReference type="SAM" id="MobiDB-lite"/>
    </source>
</evidence>
<evidence type="ECO:0000269" key="6">
    <source>
    </source>
</evidence>
<evidence type="ECO:0000269" key="7">
    <source>
    </source>
</evidence>
<evidence type="ECO:0000269" key="8">
    <source>
    </source>
</evidence>
<evidence type="ECO:0000269" key="9">
    <source>
    </source>
</evidence>
<evidence type="ECO:0000269" key="10">
    <source ref="5"/>
</evidence>
<evidence type="ECO:0000303" key="11">
    <source>
    </source>
</evidence>
<evidence type="ECO:0000305" key="12"/>
<evidence type="ECO:0007744" key="13">
    <source>
    </source>
</evidence>
<evidence type="ECO:0007744" key="14">
    <source>
    </source>
</evidence>
<evidence type="ECO:0007744" key="15">
    <source>
    </source>
</evidence>
<evidence type="ECO:0007744" key="16">
    <source>
    </source>
</evidence>
<evidence type="ECO:0007744" key="17">
    <source>
    </source>
</evidence>
<evidence type="ECO:0007744" key="18">
    <source>
    </source>
</evidence>
<evidence type="ECO:0007744" key="19">
    <source>
    </source>
</evidence>
<evidence type="ECO:0007829" key="20">
    <source>
        <dbReference type="PDB" id="7P70"/>
    </source>
</evidence>
<organism>
    <name type="scientific">Homo sapiens</name>
    <name type="common">Human</name>
    <dbReference type="NCBI Taxonomy" id="9606"/>
    <lineage>
        <taxon>Eukaryota</taxon>
        <taxon>Metazoa</taxon>
        <taxon>Chordata</taxon>
        <taxon>Craniata</taxon>
        <taxon>Vertebrata</taxon>
        <taxon>Euteleostomi</taxon>
        <taxon>Mammalia</taxon>
        <taxon>Eutheria</taxon>
        <taxon>Euarchontoglires</taxon>
        <taxon>Primates</taxon>
        <taxon>Haplorrhini</taxon>
        <taxon>Catarrhini</taxon>
        <taxon>Hominidae</taxon>
        <taxon>Homo</taxon>
    </lineage>
</organism>
<dbReference type="EMBL" id="L31529">
    <property type="protein sequence ID" value="AAA81523.1"/>
    <property type="molecule type" value="Genomic_DNA"/>
</dbReference>
<dbReference type="EMBL" id="AK292655">
    <property type="protein sequence ID" value="BAF85344.1"/>
    <property type="molecule type" value="mRNA"/>
</dbReference>
<dbReference type="EMBL" id="BC098573">
    <property type="protein sequence ID" value="AAH98573.1"/>
    <property type="molecule type" value="mRNA"/>
</dbReference>
<dbReference type="EMBL" id="AF028828">
    <property type="protein sequence ID" value="AAB84253.1"/>
    <property type="molecule type" value="mRNA"/>
</dbReference>
<dbReference type="CCDS" id="CCDS6334.1">
    <molecule id="Q13884-1"/>
</dbReference>
<dbReference type="PIR" id="I59291">
    <property type="entry name" value="I59291"/>
</dbReference>
<dbReference type="RefSeq" id="NP_066301.1">
    <molecule id="Q13884-1"/>
    <property type="nucleotide sequence ID" value="NM_021021.4"/>
</dbReference>
<dbReference type="RefSeq" id="XP_011515541.1">
    <molecule id="Q13884-2"/>
    <property type="nucleotide sequence ID" value="XM_011517239.3"/>
</dbReference>
<dbReference type="PDB" id="7P70">
    <property type="method" value="X-ray"/>
    <property type="resolution" value="2.00 A"/>
    <property type="chains" value="A=107-196"/>
</dbReference>
<dbReference type="PDB" id="7PC4">
    <property type="method" value="X-ray"/>
    <property type="resolution" value="2.30 A"/>
    <property type="chains" value="A=107-196"/>
</dbReference>
<dbReference type="PDBsum" id="7P70"/>
<dbReference type="PDBsum" id="7PC4"/>
<dbReference type="SMR" id="Q13884"/>
<dbReference type="BioGRID" id="112524">
    <property type="interactions" value="67"/>
</dbReference>
<dbReference type="ComplexPortal" id="CPX-2424">
    <property type="entry name" value="Dystrophin glycoprotein complex, skeletal muscle variant"/>
</dbReference>
<dbReference type="ComplexPortal" id="CPX-2443">
    <property type="entry name" value="Dystrophin glycoprotein complex, neuromuscular junction variant"/>
</dbReference>
<dbReference type="ComplexPortal" id="CPX-2454">
    <property type="entry name" value="Dystrophin glycoprotein complex, retinal outer plexiform layer variant"/>
</dbReference>
<dbReference type="ComplexPortal" id="CPX-2455">
    <property type="entry name" value="Dystrophin glycoprotein complex, retinal inner limiting membrane variant"/>
</dbReference>
<dbReference type="CORUM" id="Q13884"/>
<dbReference type="DIP" id="DIP-466N"/>
<dbReference type="FunCoup" id="Q13884">
    <property type="interactions" value="301"/>
</dbReference>
<dbReference type="IntAct" id="Q13884">
    <property type="interactions" value="49"/>
</dbReference>
<dbReference type="MINT" id="Q13884"/>
<dbReference type="STRING" id="9606.ENSP00000378965"/>
<dbReference type="GlyGen" id="Q13884">
    <property type="glycosylation" value="1 site, 1 O-linked glycan (1 site)"/>
</dbReference>
<dbReference type="iPTMnet" id="Q13884"/>
<dbReference type="PhosphoSitePlus" id="Q13884"/>
<dbReference type="SwissPalm" id="Q13884"/>
<dbReference type="BioMuta" id="SNTB1"/>
<dbReference type="DMDM" id="23822159"/>
<dbReference type="jPOST" id="Q13884"/>
<dbReference type="MassIVE" id="Q13884"/>
<dbReference type="PaxDb" id="9606-ENSP00000378965"/>
<dbReference type="PeptideAtlas" id="Q13884"/>
<dbReference type="ProteomicsDB" id="59711">
    <molecule id="Q13884-1"/>
</dbReference>
<dbReference type="ProteomicsDB" id="59712">
    <molecule id="Q13884-2"/>
</dbReference>
<dbReference type="Pumba" id="Q13884"/>
<dbReference type="TopDownProteomics" id="Q13884-2">
    <molecule id="Q13884-2"/>
</dbReference>
<dbReference type="Antibodypedia" id="13755">
    <property type="antibodies" value="164 antibodies from 26 providers"/>
</dbReference>
<dbReference type="DNASU" id="6641"/>
<dbReference type="Ensembl" id="ENST00000395601.7">
    <molecule id="Q13884-1"/>
    <property type="protein sequence ID" value="ENSP00000378965.3"/>
    <property type="gene ID" value="ENSG00000172164.15"/>
</dbReference>
<dbReference type="Ensembl" id="ENST00000517992.2">
    <molecule id="Q13884-1"/>
    <property type="protein sequence ID" value="ENSP00000431124.1"/>
    <property type="gene ID" value="ENSG00000172164.15"/>
</dbReference>
<dbReference type="GeneID" id="6641"/>
<dbReference type="KEGG" id="hsa:6641"/>
<dbReference type="MANE-Select" id="ENST00000517992.2">
    <property type="protein sequence ID" value="ENSP00000431124.1"/>
    <property type="RefSeq nucleotide sequence ID" value="NM_021021.4"/>
    <property type="RefSeq protein sequence ID" value="NP_066301.1"/>
</dbReference>
<dbReference type="UCSC" id="uc010mdg.4">
    <molecule id="Q13884-1"/>
    <property type="organism name" value="human"/>
</dbReference>
<dbReference type="AGR" id="HGNC:11168"/>
<dbReference type="CTD" id="6641"/>
<dbReference type="DisGeNET" id="6641"/>
<dbReference type="GeneCards" id="SNTB1"/>
<dbReference type="HGNC" id="HGNC:11168">
    <property type="gene designation" value="SNTB1"/>
</dbReference>
<dbReference type="HPA" id="ENSG00000172164">
    <property type="expression patterns" value="Tissue enhanced (liver)"/>
</dbReference>
<dbReference type="MIM" id="600026">
    <property type="type" value="gene"/>
</dbReference>
<dbReference type="neXtProt" id="NX_Q13884"/>
<dbReference type="OpenTargets" id="ENSG00000172164"/>
<dbReference type="PharmGKB" id="PA36008"/>
<dbReference type="VEuPathDB" id="HostDB:ENSG00000172164"/>
<dbReference type="eggNOG" id="KOG3551">
    <property type="taxonomic scope" value="Eukaryota"/>
</dbReference>
<dbReference type="GeneTree" id="ENSGT00950000182863"/>
<dbReference type="HOGENOM" id="CLU_026406_3_1_1"/>
<dbReference type="InParanoid" id="Q13884"/>
<dbReference type="OMA" id="GENEKQW"/>
<dbReference type="OrthoDB" id="409749at2759"/>
<dbReference type="PAN-GO" id="Q13884">
    <property type="GO annotations" value="3 GO annotations based on evolutionary models"/>
</dbReference>
<dbReference type="PhylomeDB" id="Q13884"/>
<dbReference type="TreeFam" id="TF317932"/>
<dbReference type="PathwayCommons" id="Q13884"/>
<dbReference type="Reactome" id="R-HSA-9913351">
    <property type="pathway name" value="Formation of the dystrophin-glycoprotein complex (DGC)"/>
</dbReference>
<dbReference type="SignaLink" id="Q13884"/>
<dbReference type="SIGNOR" id="Q13884"/>
<dbReference type="BioGRID-ORCS" id="6641">
    <property type="hits" value="15 hits in 1148 CRISPR screens"/>
</dbReference>
<dbReference type="CD-CODE" id="FB4E32DD">
    <property type="entry name" value="Presynaptic clusters and postsynaptic densities"/>
</dbReference>
<dbReference type="ChiTaRS" id="SNTB1">
    <property type="organism name" value="human"/>
</dbReference>
<dbReference type="GeneWiki" id="SNTB1"/>
<dbReference type="GenomeRNAi" id="6641"/>
<dbReference type="Pharos" id="Q13884">
    <property type="development level" value="Tbio"/>
</dbReference>
<dbReference type="PRO" id="PR:Q13884"/>
<dbReference type="Proteomes" id="UP000005640">
    <property type="component" value="Chromosome 8"/>
</dbReference>
<dbReference type="RNAct" id="Q13884">
    <property type="molecule type" value="protein"/>
</dbReference>
<dbReference type="Bgee" id="ENSG00000172164">
    <property type="expression patterns" value="Expressed in right adrenal gland and 162 other cell types or tissues"/>
</dbReference>
<dbReference type="ExpressionAtlas" id="Q13884">
    <property type="expression patterns" value="baseline and differential"/>
</dbReference>
<dbReference type="GO" id="GO:0005737">
    <property type="term" value="C:cytoplasm"/>
    <property type="evidence" value="ECO:0007669"/>
    <property type="project" value="UniProtKB-KW"/>
</dbReference>
<dbReference type="GO" id="GO:0005856">
    <property type="term" value="C:cytoskeleton"/>
    <property type="evidence" value="ECO:0007669"/>
    <property type="project" value="UniProtKB-SubCell"/>
</dbReference>
<dbReference type="GO" id="GO:0016010">
    <property type="term" value="C:dystrophin-associated glycoprotein complex"/>
    <property type="evidence" value="ECO:0000318"/>
    <property type="project" value="GO_Central"/>
</dbReference>
<dbReference type="GO" id="GO:0005925">
    <property type="term" value="C:focal adhesion"/>
    <property type="evidence" value="ECO:0007005"/>
    <property type="project" value="UniProtKB"/>
</dbReference>
<dbReference type="GO" id="GO:0005886">
    <property type="term" value="C:plasma membrane"/>
    <property type="evidence" value="ECO:0000304"/>
    <property type="project" value="Reactome"/>
</dbReference>
<dbReference type="GO" id="GO:0032991">
    <property type="term" value="C:protein-containing complex"/>
    <property type="evidence" value="ECO:0000314"/>
    <property type="project" value="MGI"/>
</dbReference>
<dbReference type="GO" id="GO:0042383">
    <property type="term" value="C:sarcolemma"/>
    <property type="evidence" value="ECO:0007669"/>
    <property type="project" value="UniProtKB-SubCell"/>
</dbReference>
<dbReference type="GO" id="GO:0045202">
    <property type="term" value="C:synapse"/>
    <property type="evidence" value="ECO:0000318"/>
    <property type="project" value="GO_Central"/>
</dbReference>
<dbReference type="GO" id="GO:0003779">
    <property type="term" value="F:actin binding"/>
    <property type="evidence" value="ECO:0007669"/>
    <property type="project" value="UniProtKB-KW"/>
</dbReference>
<dbReference type="GO" id="GO:0005516">
    <property type="term" value="F:calmodulin binding"/>
    <property type="evidence" value="ECO:0007669"/>
    <property type="project" value="UniProtKB-KW"/>
</dbReference>
<dbReference type="GO" id="GO:0030165">
    <property type="term" value="F:PDZ domain binding"/>
    <property type="evidence" value="ECO:0007669"/>
    <property type="project" value="Ensembl"/>
</dbReference>
<dbReference type="GO" id="GO:0005198">
    <property type="term" value="F:structural molecule activity"/>
    <property type="evidence" value="ECO:0007669"/>
    <property type="project" value="InterPro"/>
</dbReference>
<dbReference type="GO" id="GO:0006936">
    <property type="term" value="P:muscle contraction"/>
    <property type="evidence" value="ECO:0000304"/>
    <property type="project" value="ProtInc"/>
</dbReference>
<dbReference type="CDD" id="cd06801">
    <property type="entry name" value="PDZ_syntrophin-like"/>
    <property type="match status" value="1"/>
</dbReference>
<dbReference type="CDD" id="cd00821">
    <property type="entry name" value="PH"/>
    <property type="match status" value="1"/>
</dbReference>
<dbReference type="CDD" id="cd01258">
    <property type="entry name" value="PHsplit_syntrophin"/>
    <property type="match status" value="1"/>
</dbReference>
<dbReference type="FunFam" id="2.30.29.30:FF:000304">
    <property type="entry name" value="Beta-1-syntrophin isoform 1"/>
    <property type="match status" value="1"/>
</dbReference>
<dbReference type="FunFam" id="2.30.29.30:FF:000307">
    <property type="entry name" value="Beta-1-syntrophin isoform 1"/>
    <property type="match status" value="1"/>
</dbReference>
<dbReference type="FunFam" id="2.30.29.30:FF:000314">
    <property type="entry name" value="Beta-1-syntrophin isoform 1"/>
    <property type="match status" value="1"/>
</dbReference>
<dbReference type="FunFam" id="2.30.42.10:FF:000052">
    <property type="entry name" value="Syntrophin beta 1"/>
    <property type="match status" value="1"/>
</dbReference>
<dbReference type="Gene3D" id="2.30.42.10">
    <property type="match status" value="1"/>
</dbReference>
<dbReference type="Gene3D" id="2.30.29.30">
    <property type="entry name" value="Pleckstrin-homology domain (PH domain)/Phosphotyrosine-binding domain (PTB)"/>
    <property type="match status" value="3"/>
</dbReference>
<dbReference type="InterPro" id="IPR001478">
    <property type="entry name" value="PDZ"/>
</dbReference>
<dbReference type="InterPro" id="IPR036034">
    <property type="entry name" value="PDZ_sf"/>
</dbReference>
<dbReference type="InterPro" id="IPR011993">
    <property type="entry name" value="PH-like_dom_sf"/>
</dbReference>
<dbReference type="InterPro" id="IPR001849">
    <property type="entry name" value="PH_domain"/>
</dbReference>
<dbReference type="InterPro" id="IPR041428">
    <property type="entry name" value="PHsplit_syntrophin"/>
</dbReference>
<dbReference type="InterPro" id="IPR015482">
    <property type="entry name" value="Syntrophin"/>
</dbReference>
<dbReference type="InterPro" id="IPR055108">
    <property type="entry name" value="Syntrophin_4th"/>
</dbReference>
<dbReference type="PANTHER" id="PTHR10554:SF11">
    <property type="entry name" value="BETA-1-SYNTROPHIN"/>
    <property type="match status" value="1"/>
</dbReference>
<dbReference type="PANTHER" id="PTHR10554">
    <property type="entry name" value="SYNTROPHIN"/>
    <property type="match status" value="1"/>
</dbReference>
<dbReference type="Pfam" id="PF00595">
    <property type="entry name" value="PDZ"/>
    <property type="match status" value="1"/>
</dbReference>
<dbReference type="Pfam" id="PF00169">
    <property type="entry name" value="PH"/>
    <property type="match status" value="1"/>
</dbReference>
<dbReference type="Pfam" id="PF18012">
    <property type="entry name" value="PH_17"/>
    <property type="match status" value="1"/>
</dbReference>
<dbReference type="Pfam" id="PF23012">
    <property type="entry name" value="Syntrophin_4th"/>
    <property type="match status" value="1"/>
</dbReference>
<dbReference type="SMART" id="SM00228">
    <property type="entry name" value="PDZ"/>
    <property type="match status" value="1"/>
</dbReference>
<dbReference type="SMART" id="SM00233">
    <property type="entry name" value="PH"/>
    <property type="match status" value="2"/>
</dbReference>
<dbReference type="SUPFAM" id="SSF50156">
    <property type="entry name" value="PDZ domain-like"/>
    <property type="match status" value="1"/>
</dbReference>
<dbReference type="SUPFAM" id="SSF50729">
    <property type="entry name" value="PH domain-like"/>
    <property type="match status" value="2"/>
</dbReference>
<dbReference type="PROSITE" id="PS50106">
    <property type="entry name" value="PDZ"/>
    <property type="match status" value="1"/>
</dbReference>
<dbReference type="PROSITE" id="PS50003">
    <property type="entry name" value="PH_DOMAIN"/>
    <property type="match status" value="2"/>
</dbReference>
<proteinExistence type="evidence at protein level"/>
<keyword id="KW-0002">3D-structure</keyword>
<keyword id="KW-0007">Acetylation</keyword>
<keyword id="KW-0009">Actin-binding</keyword>
<keyword id="KW-0025">Alternative splicing</keyword>
<keyword id="KW-0106">Calcium</keyword>
<keyword id="KW-0112">Calmodulin-binding</keyword>
<keyword id="KW-0965">Cell junction</keyword>
<keyword id="KW-1003">Cell membrane</keyword>
<keyword id="KW-0963">Cytoplasm</keyword>
<keyword id="KW-0206">Cytoskeleton</keyword>
<keyword id="KW-0903">Direct protein sequencing</keyword>
<keyword id="KW-0472">Membrane</keyword>
<keyword id="KW-0597">Phosphoprotein</keyword>
<keyword id="KW-1267">Proteomics identification</keyword>
<keyword id="KW-1185">Reference proteome</keyword>
<keyword id="KW-0677">Repeat</keyword>
<accession>Q13884</accession>
<accession>A8K9E0</accession>
<accession>O14912</accession>
<accession>Q4KMG8</accession>